<organism>
    <name type="scientific">Mus musculus</name>
    <name type="common">Mouse</name>
    <dbReference type="NCBI Taxonomy" id="10090"/>
    <lineage>
        <taxon>Eukaryota</taxon>
        <taxon>Metazoa</taxon>
        <taxon>Chordata</taxon>
        <taxon>Craniata</taxon>
        <taxon>Vertebrata</taxon>
        <taxon>Euteleostomi</taxon>
        <taxon>Mammalia</taxon>
        <taxon>Eutheria</taxon>
        <taxon>Euarchontoglires</taxon>
        <taxon>Glires</taxon>
        <taxon>Rodentia</taxon>
        <taxon>Myomorpha</taxon>
        <taxon>Muroidea</taxon>
        <taxon>Muridae</taxon>
        <taxon>Murinae</taxon>
        <taxon>Mus</taxon>
        <taxon>Mus</taxon>
    </lineage>
</organism>
<feature type="chain" id="PRO_0000238650" description="High mobility group protein 20A">
    <location>
        <begin position="1"/>
        <end position="346"/>
    </location>
</feature>
<feature type="DNA-binding region" description="HMG box" evidence="2">
    <location>
        <begin position="102"/>
        <end position="170"/>
    </location>
</feature>
<feature type="region of interest" description="Disordered" evidence="3">
    <location>
        <begin position="1"/>
        <end position="112"/>
    </location>
</feature>
<feature type="region of interest" description="Disordered" evidence="3">
    <location>
        <begin position="178"/>
        <end position="210"/>
    </location>
</feature>
<feature type="coiled-coil region" evidence="1">
    <location>
        <begin position="228"/>
        <end position="272"/>
    </location>
</feature>
<feature type="compositionally biased region" description="Polar residues" evidence="3">
    <location>
        <begin position="1"/>
        <end position="10"/>
    </location>
</feature>
<feature type="compositionally biased region" description="Polar residues" evidence="3">
    <location>
        <begin position="55"/>
        <end position="65"/>
    </location>
</feature>
<feature type="compositionally biased region" description="Basic and acidic residues" evidence="3">
    <location>
        <begin position="71"/>
        <end position="81"/>
    </location>
</feature>
<feature type="compositionally biased region" description="Basic residues" evidence="3">
    <location>
        <begin position="82"/>
        <end position="95"/>
    </location>
</feature>
<feature type="compositionally biased region" description="Basic and acidic residues" evidence="3">
    <location>
        <begin position="181"/>
        <end position="210"/>
    </location>
</feature>
<feature type="modified residue" description="Phosphoserine" evidence="9">
    <location>
        <position position="104"/>
    </location>
</feature>
<feature type="splice variant" id="VSP_018623" description="In isoform 4." evidence="7">
    <original>QRSKRGGWSKGRKRKKPLRDSNA</original>
    <variation>VSEHLLSLSTAASKAMGMQGGIE</variation>
    <location>
        <begin position="79"/>
        <end position="101"/>
    </location>
</feature>
<feature type="splice variant" id="VSP_018624" description="In isoform 4." evidence="7">
    <location>
        <begin position="102"/>
        <end position="346"/>
    </location>
</feature>
<feature type="splice variant" id="VSP_018625" description="In isoform 3." evidence="7">
    <original>RYLDEADRDKERYMKELEQYQKTEAYKVFSR</original>
    <variation>VMVPASGVSLGFDYISQIVWGAGEIWGLGHA</variation>
    <location>
        <begin position="150"/>
        <end position="180"/>
    </location>
</feature>
<feature type="splice variant" id="VSP_018626" description="In isoform 3." evidence="7">
    <location>
        <begin position="181"/>
        <end position="346"/>
    </location>
</feature>
<feature type="splice variant" id="VSP_018627" description="In isoform 2." evidence="6 7">
    <original>SGEIPTVDTIDSYMNRLHSIILANPQDNENFIATVREVVNRLDR</original>
    <variation>NVILSEVSGRESGEDGDGVLFTLVLMWRSRSVSQEEKRRGKKNPVKIFSAVWACLKSQHSGGRGRKISVSSRPACPT</variation>
    <location>
        <begin position="303"/>
        <end position="346"/>
    </location>
</feature>
<feature type="sequence conflict" description="In Ref. 3; BAC30283." evidence="8" ref="3">
    <original>S</original>
    <variation>C</variation>
    <location>
        <position position="294"/>
    </location>
</feature>
<feature type="sequence conflict" description="In Ref. 3; BAB30892." evidence="8" ref="3">
    <original>P</original>
    <variation>T</variation>
    <location>
        <position position="301"/>
    </location>
</feature>
<dbReference type="EMBL" id="DQ182735">
    <property type="protein sequence ID" value="ABA26278.1"/>
    <property type="status" value="ALT_INIT"/>
    <property type="molecule type" value="mRNA"/>
</dbReference>
<dbReference type="EMBL" id="AK004596">
    <property type="protein sequence ID" value="BAB23397.1"/>
    <property type="molecule type" value="mRNA"/>
</dbReference>
<dbReference type="EMBL" id="AK017716">
    <property type="protein sequence ID" value="BAB30892.1"/>
    <property type="molecule type" value="mRNA"/>
</dbReference>
<dbReference type="EMBL" id="AK032790">
    <property type="protein sequence ID" value="BAC28023.1"/>
    <property type="molecule type" value="mRNA"/>
</dbReference>
<dbReference type="EMBL" id="AK039222">
    <property type="protein sequence ID" value="BAC30283.1"/>
    <property type="molecule type" value="mRNA"/>
</dbReference>
<dbReference type="EMBL" id="AK086346">
    <property type="protein sequence ID" value="BAC39652.1"/>
    <property type="molecule type" value="mRNA"/>
</dbReference>
<dbReference type="EMBL" id="AK134213">
    <property type="protein sequence ID" value="BAE22054.1"/>
    <property type="molecule type" value="mRNA"/>
</dbReference>
<dbReference type="EMBL" id="BC013804">
    <property type="protein sequence ID" value="AAH13804.1"/>
    <property type="molecule type" value="mRNA"/>
</dbReference>
<dbReference type="EMBL" id="BC068257">
    <property type="protein sequence ID" value="AAH68257.1"/>
    <property type="molecule type" value="mRNA"/>
</dbReference>
<dbReference type="CCDS" id="CCDS23208.1">
    <molecule id="Q9DC33-1"/>
</dbReference>
<dbReference type="RefSeq" id="NP_080088.1">
    <molecule id="Q9DC33-1"/>
    <property type="nucleotide sequence ID" value="NM_025812.3"/>
</dbReference>
<dbReference type="RefSeq" id="XP_006511431.1">
    <property type="nucleotide sequence ID" value="XM_006511368.2"/>
</dbReference>
<dbReference type="RefSeq" id="XP_036011088.1">
    <molecule id="Q9DC33-1"/>
    <property type="nucleotide sequence ID" value="XM_036155195.1"/>
</dbReference>
<dbReference type="SMR" id="Q9DC33"/>
<dbReference type="BioGRID" id="211774">
    <property type="interactions" value="15"/>
</dbReference>
<dbReference type="FunCoup" id="Q9DC33">
    <property type="interactions" value="3679"/>
</dbReference>
<dbReference type="IntAct" id="Q9DC33">
    <property type="interactions" value="1"/>
</dbReference>
<dbReference type="STRING" id="10090.ENSMUSP00000034879"/>
<dbReference type="iPTMnet" id="Q9DC33"/>
<dbReference type="PhosphoSitePlus" id="Q9DC33"/>
<dbReference type="jPOST" id="Q9DC33"/>
<dbReference type="PaxDb" id="10090-ENSMUSP00000034879"/>
<dbReference type="PeptideAtlas" id="Q9DC33"/>
<dbReference type="ProteomicsDB" id="273176">
    <molecule id="Q9DC33-1"/>
</dbReference>
<dbReference type="ProteomicsDB" id="273177">
    <molecule id="Q9DC33-2"/>
</dbReference>
<dbReference type="ProteomicsDB" id="273178">
    <molecule id="Q9DC33-3"/>
</dbReference>
<dbReference type="ProteomicsDB" id="273179">
    <molecule id="Q9DC33-4"/>
</dbReference>
<dbReference type="Pumba" id="Q9DC33"/>
<dbReference type="Antibodypedia" id="1449">
    <property type="antibodies" value="328 antibodies from 32 providers"/>
</dbReference>
<dbReference type="DNASU" id="66867"/>
<dbReference type="Ensembl" id="ENSMUST00000034879.5">
    <molecule id="Q9DC33-1"/>
    <property type="protein sequence ID" value="ENSMUSP00000034879.4"/>
    <property type="gene ID" value="ENSMUSG00000032329.5"/>
</dbReference>
<dbReference type="Ensembl" id="ENSMUST00000214869.2">
    <molecule id="Q9DC33-4"/>
    <property type="protein sequence ID" value="ENSMUSP00000150382.2"/>
    <property type="gene ID" value="ENSMUSG00000032329.5"/>
</dbReference>
<dbReference type="Ensembl" id="ENSMUST00000215269.2">
    <molecule id="Q9DC33-1"/>
    <property type="protein sequence ID" value="ENSMUSP00000149698.2"/>
    <property type="gene ID" value="ENSMUSG00000032329.5"/>
</dbReference>
<dbReference type="Ensembl" id="ENSMUST00000217518.2">
    <molecule id="Q9DC33-2"/>
    <property type="protein sequence ID" value="ENSMUSP00000149359.2"/>
    <property type="gene ID" value="ENSMUSG00000032329.5"/>
</dbReference>
<dbReference type="GeneID" id="66867"/>
<dbReference type="KEGG" id="mmu:66867"/>
<dbReference type="UCSC" id="uc009ptb.1">
    <molecule id="Q9DC33-4"/>
    <property type="organism name" value="mouse"/>
</dbReference>
<dbReference type="UCSC" id="uc009ptc.1">
    <molecule id="Q9DC33-3"/>
    <property type="organism name" value="mouse"/>
</dbReference>
<dbReference type="UCSC" id="uc009ptd.1">
    <molecule id="Q9DC33-2"/>
    <property type="organism name" value="mouse"/>
</dbReference>
<dbReference type="UCSC" id="uc009pte.1">
    <molecule id="Q9DC33-1"/>
    <property type="organism name" value="mouse"/>
</dbReference>
<dbReference type="AGR" id="MGI:1914117"/>
<dbReference type="CTD" id="10363"/>
<dbReference type="MGI" id="MGI:1914117">
    <property type="gene designation" value="Hmg20a"/>
</dbReference>
<dbReference type="VEuPathDB" id="HostDB:ENSMUSG00000032329"/>
<dbReference type="eggNOG" id="KOG0381">
    <property type="taxonomic scope" value="Eukaryota"/>
</dbReference>
<dbReference type="GeneTree" id="ENSGT00940000158464"/>
<dbReference type="HOGENOM" id="CLU_060006_0_0_1"/>
<dbReference type="InParanoid" id="Q9DC33"/>
<dbReference type="OMA" id="PRRGNWT"/>
<dbReference type="OrthoDB" id="53793at9989"/>
<dbReference type="PhylomeDB" id="Q9DC33"/>
<dbReference type="TreeFam" id="TF106440"/>
<dbReference type="BioGRID-ORCS" id="66867">
    <property type="hits" value="6 hits in 81 CRISPR screens"/>
</dbReference>
<dbReference type="ChiTaRS" id="Hmg20a">
    <property type="organism name" value="mouse"/>
</dbReference>
<dbReference type="PRO" id="PR:Q9DC33"/>
<dbReference type="Proteomes" id="UP000000589">
    <property type="component" value="Chromosome 9"/>
</dbReference>
<dbReference type="RNAct" id="Q9DC33">
    <property type="molecule type" value="protein"/>
</dbReference>
<dbReference type="Bgee" id="ENSMUSG00000032329">
    <property type="expression patterns" value="Expressed in humerus cartilage element and 270 other cell types or tissues"/>
</dbReference>
<dbReference type="ExpressionAtlas" id="Q9DC33">
    <property type="expression patterns" value="baseline and differential"/>
</dbReference>
<dbReference type="GO" id="GO:0005634">
    <property type="term" value="C:nucleus"/>
    <property type="evidence" value="ECO:0000314"/>
    <property type="project" value="MGI"/>
</dbReference>
<dbReference type="GO" id="GO:0003677">
    <property type="term" value="F:DNA binding"/>
    <property type="evidence" value="ECO:0007669"/>
    <property type="project" value="UniProtKB-KW"/>
</dbReference>
<dbReference type="GO" id="GO:0042802">
    <property type="term" value="F:identical protein binding"/>
    <property type="evidence" value="ECO:0007669"/>
    <property type="project" value="Ensembl"/>
</dbReference>
<dbReference type="GO" id="GO:0006325">
    <property type="term" value="P:chromatin organization"/>
    <property type="evidence" value="ECO:0007669"/>
    <property type="project" value="UniProtKB-KW"/>
</dbReference>
<dbReference type="GO" id="GO:0045665">
    <property type="term" value="P:negative regulation of neuron differentiation"/>
    <property type="evidence" value="ECO:0000314"/>
    <property type="project" value="MGI"/>
</dbReference>
<dbReference type="GO" id="GO:0033234">
    <property type="term" value="P:negative regulation of protein sumoylation"/>
    <property type="evidence" value="ECO:0000315"/>
    <property type="project" value="MGI"/>
</dbReference>
<dbReference type="GO" id="GO:0000122">
    <property type="term" value="P:negative regulation of transcription by RNA polymerase II"/>
    <property type="evidence" value="ECO:0000315"/>
    <property type="project" value="MGI"/>
</dbReference>
<dbReference type="CDD" id="cd22017">
    <property type="entry name" value="HMG-box_HMG20A"/>
    <property type="match status" value="1"/>
</dbReference>
<dbReference type="FunFam" id="1.10.30.10:FF:000031">
    <property type="entry name" value="High mobility group protein 20A"/>
    <property type="match status" value="1"/>
</dbReference>
<dbReference type="Gene3D" id="1.10.30.10">
    <property type="entry name" value="High mobility group box domain"/>
    <property type="match status" value="1"/>
</dbReference>
<dbReference type="InterPro" id="IPR051965">
    <property type="entry name" value="ChromReg_NeuronalGeneExpr"/>
</dbReference>
<dbReference type="InterPro" id="IPR009071">
    <property type="entry name" value="HMG_box_dom"/>
</dbReference>
<dbReference type="InterPro" id="IPR036910">
    <property type="entry name" value="HMG_box_dom_sf"/>
</dbReference>
<dbReference type="PANTHER" id="PTHR46040">
    <property type="entry name" value="HIGH MOBILITY GROUP PROTEIN 2"/>
    <property type="match status" value="1"/>
</dbReference>
<dbReference type="PANTHER" id="PTHR46040:SF1">
    <property type="entry name" value="HIGH MOBILITY GROUP PROTEIN 20A-RELATED"/>
    <property type="match status" value="1"/>
</dbReference>
<dbReference type="Pfam" id="PF00505">
    <property type="entry name" value="HMG_box"/>
    <property type="match status" value="1"/>
</dbReference>
<dbReference type="SMART" id="SM00398">
    <property type="entry name" value="HMG"/>
    <property type="match status" value="1"/>
</dbReference>
<dbReference type="SUPFAM" id="SSF47095">
    <property type="entry name" value="HMG-box"/>
    <property type="match status" value="1"/>
</dbReference>
<dbReference type="PROSITE" id="PS50118">
    <property type="entry name" value="HMG_BOX_2"/>
    <property type="match status" value="1"/>
</dbReference>
<evidence type="ECO:0000255" key="1"/>
<evidence type="ECO:0000255" key="2">
    <source>
        <dbReference type="PROSITE-ProRule" id="PRU00267"/>
    </source>
</evidence>
<evidence type="ECO:0000256" key="3">
    <source>
        <dbReference type="SAM" id="MobiDB-lite"/>
    </source>
</evidence>
<evidence type="ECO:0000269" key="4">
    <source>
    </source>
</evidence>
<evidence type="ECO:0000269" key="5">
    <source>
    </source>
</evidence>
<evidence type="ECO:0000303" key="6">
    <source>
    </source>
</evidence>
<evidence type="ECO:0000303" key="7">
    <source>
    </source>
</evidence>
<evidence type="ECO:0000305" key="8"/>
<evidence type="ECO:0007744" key="9">
    <source>
    </source>
</evidence>
<name>HM20A_MOUSE</name>
<comment type="function">
    <text evidence="4">Plays a role in neuronal differentiation as chromatin-associated protein. Acts as inhibitor of HMG20B. Overcomes the repressive effects of the neuronal silencer REST and induces the activation of neuronal-specific genes. Involved in the recruitment of the histone methyltransferase KMT2A/MLL1 and consequent increased methylation of histone H3 lysine 4.</text>
</comment>
<comment type="subunit">
    <text evidence="5">Interacts with DTNB.</text>
</comment>
<comment type="subcellular location">
    <subcellularLocation>
        <location evidence="2">Nucleus</location>
    </subcellularLocation>
</comment>
<comment type="alternative products">
    <event type="alternative splicing"/>
    <isoform>
        <id>Q9DC33-1</id>
        <name>1</name>
        <sequence type="displayed"/>
    </isoform>
    <isoform>
        <id>Q9DC33-2</id>
        <name>2</name>
        <sequence type="described" ref="VSP_018627"/>
    </isoform>
    <isoform>
        <id>Q9DC33-3</id>
        <name>3</name>
        <sequence type="described" ref="VSP_018625 VSP_018626"/>
    </isoform>
    <isoform>
        <id>Q9DC33-4</id>
        <name>4</name>
        <sequence type="described" ref="VSP_018623 VSP_018624"/>
    </isoform>
</comment>
<comment type="tissue specificity">
    <text evidence="4">Expressed in brain. Detected in mature neurons.</text>
</comment>
<comment type="developmental stage">
    <text evidence="4">Detected at 16.5 dpc in the outer cortex of the developing brain.</text>
</comment>
<comment type="sequence caution" evidence="8">
    <conflict type="erroneous initiation">
        <sequence resource="EMBL-CDS" id="ABA26278"/>
    </conflict>
</comment>
<sequence>MESLMASSTLPPLFADEDGSKESNDLATSGLTHPEGPYGSAATSTTNPEFVEDLSQGQLLQSEASNAVEGNEQRPEDEQRSKRGGWSKGRKRKKPLRDSNAPKSPLTGYVRFMNERREQLRAKRPEVPFPEITRMLGNEWSKLPPEEKQRYLDEADRDKERYMKELEQYQKTEAYKVFSRKTQDRQKGKSHRQDAARQATHDHEKETEVKERSVFDIPIFTEEFLNHSKAREAELRQLRKSNMEFEERNAALQKHVESMRTAVEKLEVDVIQERSRNTVLQQHLETLRQMLTSSFASMPLPGSGEIPTVDTIDSYMNRLHSIILANPQDNENFIATVREVVNRLDR</sequence>
<protein>
    <recommendedName>
        <fullName>High mobility group protein 20A</fullName>
    </recommendedName>
    <alternativeName>
        <fullName>HMG box-containing protein 20A</fullName>
    </alternativeName>
    <alternativeName>
        <fullName>HMG domain-containing protein HMGX1</fullName>
    </alternativeName>
    <alternativeName>
        <fullName>Inhibitor of BRAF35</fullName>
        <shortName>iBRAF</shortName>
    </alternativeName>
</protein>
<gene>
    <name type="primary">Hmg20a</name>
    <name type="synonym">Ibraf</name>
</gene>
<accession>Q9DC33</accession>
<accession>Q3LSF9</accession>
<accession>Q6NV87</accession>
<accession>Q8BSK1</accession>
<accession>Q8C3C1</accession>
<accession>Q8CAA0</accession>
<accession>Q9CYG2</accession>
<reference key="1">
    <citation type="journal article" date="2000" name="Cytogenet. Cell Genet.">
        <title>HMG20A and HMG20B map to human chromosomes 15q24 and 19p13.3 and constitute a distinct class of HMG-box genes with ubiquitous expression.</title>
        <authorList>
            <person name="Sumoy L."/>
            <person name="Carim-Todd L."/>
            <person name="Escarceller M."/>
            <person name="Nadal M."/>
            <person name="Gratacos M."/>
            <person name="Pujana M.A."/>
            <person name="Estivill X."/>
            <person name="Peral B."/>
        </authorList>
    </citation>
    <scope>NUCLEOTIDE SEQUENCE [MRNA] (ISOFORM 1)</scope>
</reference>
<reference key="2">
    <citation type="journal article" date="2005" name="Nat. Cell Biol.">
        <title>Recruitment of MLL by HMG-domain protein iBRAF promotes neural differentiation.</title>
        <authorList>
            <person name="Wynder C."/>
            <person name="Hakimi M.-A."/>
            <person name="Epstein J.A."/>
            <person name="Shilatifard A."/>
            <person name="Shiekhattar R."/>
        </authorList>
    </citation>
    <scope>NUCLEOTIDE SEQUENCE [MRNA] (ISOFORM 1)</scope>
    <scope>TISSUE SPECIFICITY</scope>
    <scope>DEVELOPMENTAL STAGE</scope>
    <scope>FUNCTION</scope>
    <source>
        <strain>C57BL/6J</strain>
    </source>
</reference>
<reference key="3">
    <citation type="journal article" date="2005" name="Science">
        <title>The transcriptional landscape of the mammalian genome.</title>
        <authorList>
            <person name="Carninci P."/>
            <person name="Kasukawa T."/>
            <person name="Katayama S."/>
            <person name="Gough J."/>
            <person name="Frith M.C."/>
            <person name="Maeda N."/>
            <person name="Oyama R."/>
            <person name="Ravasi T."/>
            <person name="Lenhard B."/>
            <person name="Wells C."/>
            <person name="Kodzius R."/>
            <person name="Shimokawa K."/>
            <person name="Bajic V.B."/>
            <person name="Brenner S.E."/>
            <person name="Batalov S."/>
            <person name="Forrest A.R."/>
            <person name="Zavolan M."/>
            <person name="Davis M.J."/>
            <person name="Wilming L.G."/>
            <person name="Aidinis V."/>
            <person name="Allen J.E."/>
            <person name="Ambesi-Impiombato A."/>
            <person name="Apweiler R."/>
            <person name="Aturaliya R.N."/>
            <person name="Bailey T.L."/>
            <person name="Bansal M."/>
            <person name="Baxter L."/>
            <person name="Beisel K.W."/>
            <person name="Bersano T."/>
            <person name="Bono H."/>
            <person name="Chalk A.M."/>
            <person name="Chiu K.P."/>
            <person name="Choudhary V."/>
            <person name="Christoffels A."/>
            <person name="Clutterbuck D.R."/>
            <person name="Crowe M.L."/>
            <person name="Dalla E."/>
            <person name="Dalrymple B.P."/>
            <person name="de Bono B."/>
            <person name="Della Gatta G."/>
            <person name="di Bernardo D."/>
            <person name="Down T."/>
            <person name="Engstrom P."/>
            <person name="Fagiolini M."/>
            <person name="Faulkner G."/>
            <person name="Fletcher C.F."/>
            <person name="Fukushima T."/>
            <person name="Furuno M."/>
            <person name="Futaki S."/>
            <person name="Gariboldi M."/>
            <person name="Georgii-Hemming P."/>
            <person name="Gingeras T.R."/>
            <person name="Gojobori T."/>
            <person name="Green R.E."/>
            <person name="Gustincich S."/>
            <person name="Harbers M."/>
            <person name="Hayashi Y."/>
            <person name="Hensch T.K."/>
            <person name="Hirokawa N."/>
            <person name="Hill D."/>
            <person name="Huminiecki L."/>
            <person name="Iacono M."/>
            <person name="Ikeo K."/>
            <person name="Iwama A."/>
            <person name="Ishikawa T."/>
            <person name="Jakt M."/>
            <person name="Kanapin A."/>
            <person name="Katoh M."/>
            <person name="Kawasawa Y."/>
            <person name="Kelso J."/>
            <person name="Kitamura H."/>
            <person name="Kitano H."/>
            <person name="Kollias G."/>
            <person name="Krishnan S.P."/>
            <person name="Kruger A."/>
            <person name="Kummerfeld S.K."/>
            <person name="Kurochkin I.V."/>
            <person name="Lareau L.F."/>
            <person name="Lazarevic D."/>
            <person name="Lipovich L."/>
            <person name="Liu J."/>
            <person name="Liuni S."/>
            <person name="McWilliam S."/>
            <person name="Madan Babu M."/>
            <person name="Madera M."/>
            <person name="Marchionni L."/>
            <person name="Matsuda H."/>
            <person name="Matsuzawa S."/>
            <person name="Miki H."/>
            <person name="Mignone F."/>
            <person name="Miyake S."/>
            <person name="Morris K."/>
            <person name="Mottagui-Tabar S."/>
            <person name="Mulder N."/>
            <person name="Nakano N."/>
            <person name="Nakauchi H."/>
            <person name="Ng P."/>
            <person name="Nilsson R."/>
            <person name="Nishiguchi S."/>
            <person name="Nishikawa S."/>
            <person name="Nori F."/>
            <person name="Ohara O."/>
            <person name="Okazaki Y."/>
            <person name="Orlando V."/>
            <person name="Pang K.C."/>
            <person name="Pavan W.J."/>
            <person name="Pavesi G."/>
            <person name="Pesole G."/>
            <person name="Petrovsky N."/>
            <person name="Piazza S."/>
            <person name="Reed J."/>
            <person name="Reid J.F."/>
            <person name="Ring B.Z."/>
            <person name="Ringwald M."/>
            <person name="Rost B."/>
            <person name="Ruan Y."/>
            <person name="Salzberg S.L."/>
            <person name="Sandelin A."/>
            <person name="Schneider C."/>
            <person name="Schoenbach C."/>
            <person name="Sekiguchi K."/>
            <person name="Semple C.A."/>
            <person name="Seno S."/>
            <person name="Sessa L."/>
            <person name="Sheng Y."/>
            <person name="Shibata Y."/>
            <person name="Shimada H."/>
            <person name="Shimada K."/>
            <person name="Silva D."/>
            <person name="Sinclair B."/>
            <person name="Sperling S."/>
            <person name="Stupka E."/>
            <person name="Sugiura K."/>
            <person name="Sultana R."/>
            <person name="Takenaka Y."/>
            <person name="Taki K."/>
            <person name="Tammoja K."/>
            <person name="Tan S.L."/>
            <person name="Tang S."/>
            <person name="Taylor M.S."/>
            <person name="Tegner J."/>
            <person name="Teichmann S.A."/>
            <person name="Ueda H.R."/>
            <person name="van Nimwegen E."/>
            <person name="Verardo R."/>
            <person name="Wei C.L."/>
            <person name="Yagi K."/>
            <person name="Yamanishi H."/>
            <person name="Zabarovsky E."/>
            <person name="Zhu S."/>
            <person name="Zimmer A."/>
            <person name="Hide W."/>
            <person name="Bult C."/>
            <person name="Grimmond S.M."/>
            <person name="Teasdale R.D."/>
            <person name="Liu E.T."/>
            <person name="Brusic V."/>
            <person name="Quackenbush J."/>
            <person name="Wahlestedt C."/>
            <person name="Mattick J.S."/>
            <person name="Hume D.A."/>
            <person name="Kai C."/>
            <person name="Sasaki D."/>
            <person name="Tomaru Y."/>
            <person name="Fukuda S."/>
            <person name="Kanamori-Katayama M."/>
            <person name="Suzuki M."/>
            <person name="Aoki J."/>
            <person name="Arakawa T."/>
            <person name="Iida J."/>
            <person name="Imamura K."/>
            <person name="Itoh M."/>
            <person name="Kato T."/>
            <person name="Kawaji H."/>
            <person name="Kawagashira N."/>
            <person name="Kawashima T."/>
            <person name="Kojima M."/>
            <person name="Kondo S."/>
            <person name="Konno H."/>
            <person name="Nakano K."/>
            <person name="Ninomiya N."/>
            <person name="Nishio T."/>
            <person name="Okada M."/>
            <person name="Plessy C."/>
            <person name="Shibata K."/>
            <person name="Shiraki T."/>
            <person name="Suzuki S."/>
            <person name="Tagami M."/>
            <person name="Waki K."/>
            <person name="Watahiki A."/>
            <person name="Okamura-Oho Y."/>
            <person name="Suzuki H."/>
            <person name="Kawai J."/>
            <person name="Hayashizaki Y."/>
        </authorList>
    </citation>
    <scope>NUCLEOTIDE SEQUENCE [LARGE SCALE MRNA] (ISOFORMS 1; 2; 3 AND 4)</scope>
    <source>
        <strain>C57BL/6J</strain>
        <tissue>Embryo</tissue>
        <tissue>Hypothalamus</tissue>
        <tissue>Lung</tissue>
        <tissue>Thymus</tissue>
        <tissue>Wolffian duct</tissue>
    </source>
</reference>
<reference key="4">
    <citation type="journal article" date="2004" name="Genome Res.">
        <title>The status, quality, and expansion of the NIH full-length cDNA project: the Mammalian Gene Collection (MGC).</title>
        <authorList>
            <consortium name="The MGC Project Team"/>
        </authorList>
    </citation>
    <scope>NUCLEOTIDE SEQUENCE [LARGE SCALE MRNA] (ISOFORMS 1 AND 2)</scope>
    <source>
        <strain>FVB/N</strain>
        <tissue>Mammary tumor</tissue>
        <tissue>Pancreas</tissue>
    </source>
</reference>
<reference key="5">
    <citation type="journal article" date="2010" name="Cell">
        <title>A tissue-specific atlas of mouse protein phosphorylation and expression.</title>
        <authorList>
            <person name="Huttlin E.L."/>
            <person name="Jedrychowski M.P."/>
            <person name="Elias J.E."/>
            <person name="Goswami T."/>
            <person name="Rad R."/>
            <person name="Beausoleil S.A."/>
            <person name="Villen J."/>
            <person name="Haas W."/>
            <person name="Sowa M.E."/>
            <person name="Gygi S.P."/>
        </authorList>
    </citation>
    <scope>PHOSPHORYLATION [LARGE SCALE ANALYSIS] AT SER-104</scope>
    <scope>IDENTIFICATION BY MASS SPECTROMETRY [LARGE SCALE ANALYSIS]</scope>
    <source>
        <tissue>Kidney</tissue>
        <tissue>Lung</tissue>
        <tissue>Spleen</tissue>
        <tissue>Testis</tissue>
    </source>
</reference>
<reference key="6">
    <citation type="journal article" date="2010" name="J. Biol. Chem.">
        <title>The interaction with HMG20a/b proteins suggests a potential role for beta-dystrobrevin in neuronal differentiation.</title>
        <authorList>
            <person name="Artegiani B."/>
            <person name="Labbaye C."/>
            <person name="Sferra A."/>
            <person name="Quaranta M.T."/>
            <person name="Torreri P."/>
            <person name="Macchia G."/>
            <person name="Ceccarini M."/>
            <person name="Petrucci T.C."/>
            <person name="Macioce P."/>
        </authorList>
    </citation>
    <scope>INTERACTION WITH DTNB</scope>
</reference>
<proteinExistence type="evidence at protein level"/>
<keyword id="KW-0025">Alternative splicing</keyword>
<keyword id="KW-0156">Chromatin regulator</keyword>
<keyword id="KW-0175">Coiled coil</keyword>
<keyword id="KW-0238">DNA-binding</keyword>
<keyword id="KW-0539">Nucleus</keyword>
<keyword id="KW-0597">Phosphoprotein</keyword>
<keyword id="KW-1185">Reference proteome</keyword>
<keyword id="KW-0804">Transcription</keyword>
<keyword id="KW-0805">Transcription regulation</keyword>